<organism>
    <name type="scientific">Homo sapiens</name>
    <name type="common">Human</name>
    <dbReference type="NCBI Taxonomy" id="9606"/>
    <lineage>
        <taxon>Eukaryota</taxon>
        <taxon>Metazoa</taxon>
        <taxon>Chordata</taxon>
        <taxon>Craniata</taxon>
        <taxon>Vertebrata</taxon>
        <taxon>Euteleostomi</taxon>
        <taxon>Mammalia</taxon>
        <taxon>Eutheria</taxon>
        <taxon>Euarchontoglires</taxon>
        <taxon>Primates</taxon>
        <taxon>Haplorrhini</taxon>
        <taxon>Catarrhini</taxon>
        <taxon>Hominidae</taxon>
        <taxon>Homo</taxon>
    </lineage>
</organism>
<evidence type="ECO:0000250" key="1"/>
<evidence type="ECO:0000255" key="2"/>
<evidence type="ECO:0000255" key="3">
    <source>
        <dbReference type="PROSITE-ProRule" id="PRU00837"/>
    </source>
</evidence>
<evidence type="ECO:0000256" key="4">
    <source>
        <dbReference type="SAM" id="MobiDB-lite"/>
    </source>
</evidence>
<evidence type="ECO:0000269" key="5">
    <source>
    </source>
</evidence>
<evidence type="ECO:0000303" key="6">
    <source>
    </source>
</evidence>
<evidence type="ECO:0000305" key="7"/>
<evidence type="ECO:0000312" key="8">
    <source>
        <dbReference type="HGNC" id="HGNC:18463"/>
    </source>
</evidence>
<comment type="function">
    <text evidence="1">May play a key role in the control of gene expression during oogenesis and early embryogenesis, presumably through the perturbation of chromatin structure. Essential for meiotic maturation of germinal vesicle-stage oocytes. The somatic type linker histone H1c is rapidly replaced by H1oo in a donor nucleus transplanted into an oocyte. The greater mobility of H1oo as compared to H1c may contribute to this rapid replacement and increased instability of the embryonic chromatin structure. The rapid replacement of H1c with H1oo may play an important role in nuclear remodeling (By similarity).</text>
</comment>
<comment type="subcellular location">
    <subcellularLocation>
        <location evidence="1">Cytoplasm</location>
    </subcellularLocation>
    <subcellularLocation>
        <location evidence="3">Nucleus</location>
    </subcellularLocation>
    <subcellularLocation>
        <location evidence="3">Chromosome</location>
    </subcellularLocation>
</comment>
<comment type="alternative products">
    <event type="alternative splicing"/>
    <isoform>
        <id>Q8IZA3-1</id>
        <name>1</name>
        <sequence type="displayed"/>
    </isoform>
    <isoform>
        <id>Q8IZA3-2</id>
        <name>2</name>
        <sequence type="described" ref="VSP_034592"/>
    </isoform>
</comment>
<comment type="tissue specificity">
    <text evidence="5">Oocyte-specific.</text>
</comment>
<comment type="similarity">
    <text evidence="3">Belongs to the histone H1/H5 family.</text>
</comment>
<reference key="1">
    <citation type="journal article" date="2003" name="Biochem. Biophys. Res. Commun.">
        <title>Structure and expression of the human oocyte-specific histone H1 gene elucidated by direct RT-nested PCR of a single oocyte.</title>
        <authorList>
            <person name="Tanaka Y."/>
            <person name="Kato S."/>
            <person name="Tanaka M."/>
            <person name="Kuji N."/>
            <person name="Yoshimura Y."/>
        </authorList>
    </citation>
    <scope>NUCLEOTIDE SEQUENCE [MRNA] (ISOFORM 1)</scope>
    <scope>TISSUE SPECIFICITY</scope>
</reference>
<reference key="2">
    <citation type="submission" date="2005-09" db="EMBL/GenBank/DDBJ databases">
        <authorList>
            <person name="Mural R.J."/>
            <person name="Istrail S."/>
            <person name="Sutton G.G."/>
            <person name="Florea L."/>
            <person name="Halpern A.L."/>
            <person name="Mobarry C.M."/>
            <person name="Lippert R."/>
            <person name="Walenz B."/>
            <person name="Shatkay H."/>
            <person name="Dew I."/>
            <person name="Miller J.R."/>
            <person name="Flanigan M.J."/>
            <person name="Edwards N.J."/>
            <person name="Bolanos R."/>
            <person name="Fasulo D."/>
            <person name="Halldorsson B.V."/>
            <person name="Hannenhalli S."/>
            <person name="Turner R."/>
            <person name="Yooseph S."/>
            <person name="Lu F."/>
            <person name="Nusskern D.R."/>
            <person name="Shue B.C."/>
            <person name="Zheng X.H."/>
            <person name="Zhong F."/>
            <person name="Delcher A.L."/>
            <person name="Huson D.H."/>
            <person name="Kravitz S.A."/>
            <person name="Mouchard L."/>
            <person name="Reinert K."/>
            <person name="Remington K.A."/>
            <person name="Clark A.G."/>
            <person name="Waterman M.S."/>
            <person name="Eichler E.E."/>
            <person name="Adams M.D."/>
            <person name="Hunkapiller M.W."/>
            <person name="Myers E.W."/>
            <person name="Venter J.C."/>
        </authorList>
    </citation>
    <scope>NUCLEOTIDE SEQUENCE [LARGE SCALE GENOMIC DNA]</scope>
</reference>
<reference key="3">
    <citation type="journal article" date="2004" name="Genome Res.">
        <title>The status, quality, and expansion of the NIH full-length cDNA project: the Mammalian Gene Collection (MGC).</title>
        <authorList>
            <consortium name="The MGC Project Team"/>
        </authorList>
    </citation>
    <scope>NUCLEOTIDE SEQUENCE [LARGE SCALE MRNA] (ISOFORM 2)</scope>
    <source>
        <tissue>Brain</tissue>
    </source>
</reference>
<feature type="chain" id="PRO_0000343412" description="Histone H1.8">
    <location>
        <begin position="1"/>
        <end position="346"/>
    </location>
</feature>
<feature type="domain" description="H15" evidence="3">
    <location>
        <begin position="51"/>
        <end position="129"/>
    </location>
</feature>
<feature type="region of interest" description="Disordered" evidence="4">
    <location>
        <begin position="1"/>
        <end position="50"/>
    </location>
</feature>
<feature type="region of interest" description="Disordered" evidence="4">
    <location>
        <begin position="121"/>
        <end position="346"/>
    </location>
</feature>
<feature type="short sequence motif" description="Nuclear localization signal" evidence="2">
    <location>
        <begin position="164"/>
        <end position="179"/>
    </location>
</feature>
<feature type="compositionally biased region" description="Low complexity" evidence="4">
    <location>
        <begin position="1"/>
        <end position="23"/>
    </location>
</feature>
<feature type="compositionally biased region" description="Low complexity" evidence="4">
    <location>
        <begin position="38"/>
        <end position="48"/>
    </location>
</feature>
<feature type="compositionally biased region" description="Basic residues" evidence="4">
    <location>
        <begin position="128"/>
        <end position="137"/>
    </location>
</feature>
<feature type="compositionally biased region" description="Basic and acidic residues" evidence="4">
    <location>
        <begin position="148"/>
        <end position="167"/>
    </location>
</feature>
<feature type="compositionally biased region" description="Basic residues" evidence="4">
    <location>
        <begin position="172"/>
        <end position="182"/>
    </location>
</feature>
<feature type="compositionally biased region" description="Basic and acidic residues" evidence="4">
    <location>
        <begin position="205"/>
        <end position="225"/>
    </location>
</feature>
<feature type="compositionally biased region" description="Basic and acidic residues" evidence="4">
    <location>
        <begin position="251"/>
        <end position="262"/>
    </location>
</feature>
<feature type="compositionally biased region" description="Basic residues" evidence="4">
    <location>
        <begin position="278"/>
        <end position="288"/>
    </location>
</feature>
<feature type="compositionally biased region" description="Low complexity" evidence="4">
    <location>
        <begin position="298"/>
        <end position="309"/>
    </location>
</feature>
<feature type="compositionally biased region" description="Polar residues" evidence="4">
    <location>
        <begin position="334"/>
        <end position="346"/>
    </location>
</feature>
<feature type="splice variant" id="VSP_034592" description="In isoform 2." evidence="6">
    <location>
        <begin position="1"/>
        <end position="139"/>
    </location>
</feature>
<feature type="sequence variant" id="VAR_061208" description="In dbSNP:rs59415528.">
    <original>N</original>
    <variation>S</variation>
    <location>
        <position position="296"/>
    </location>
</feature>
<sequence>MAPGSVTSDISPSSTSTAGSSRSPESEKPGPSHGGVPPGGPSHSSLPVGRRHPPVLRMVLEALQAGEQRRGTSVAAIKLYILHKYPTVDVLRFKYLLKQALATGMRRGLLARPLNSKARGATGSFKLVPKHKKKIQPRKMAPATAPRRAGEAKGKGPKKPSEAKEDPPNVGKVKKAAKRPAKVQKPPPKPGAATEKARKQGGAAKDTRAQSGEARKVPPKPDKAMRAPSSAGGLSRKAKAKGSRSSQGDAEAYRKTKAESKSSKPTASKVKNGAASPTKKKVVAKAKAPKAGQGPNTKAAAPAKGSGSKVVPAHLSRKTEAPKGPRKAGLPIKASSSKVSSQRAEA</sequence>
<name>H18_HUMAN</name>
<proteinExistence type="evidence at transcript level"/>
<protein>
    <recommendedName>
        <fullName evidence="7">Histone H1.8</fullName>
    </recommendedName>
    <alternativeName>
        <fullName>Histone H1oo</fullName>
    </alternativeName>
    <alternativeName>
        <fullName>Oocyte-specific histone H1</fullName>
    </alternativeName>
    <alternativeName>
        <fullName>Oocyte-specific linker histone H1</fullName>
        <shortName>osH1</shortName>
    </alternativeName>
</protein>
<dbReference type="EMBL" id="AY158091">
    <property type="protein sequence ID" value="AAN46899.1"/>
    <property type="molecule type" value="mRNA"/>
</dbReference>
<dbReference type="EMBL" id="CH471052">
    <property type="protein sequence ID" value="EAW79242.1"/>
    <property type="molecule type" value="Genomic_DNA"/>
</dbReference>
<dbReference type="EMBL" id="CH471052">
    <property type="protein sequence ID" value="EAW79243.1"/>
    <property type="molecule type" value="Genomic_DNA"/>
</dbReference>
<dbReference type="EMBL" id="BC047943">
    <property type="protein sequence ID" value="AAH47943.1"/>
    <property type="molecule type" value="mRNA"/>
</dbReference>
<dbReference type="CCDS" id="CCDS3064.1">
    <molecule id="Q8IZA3-1"/>
</dbReference>
<dbReference type="CCDS" id="CCDS77815.1">
    <molecule id="Q8IZA3-2"/>
</dbReference>
<dbReference type="RefSeq" id="NP_001295191.1">
    <molecule id="Q8IZA3-2"/>
    <property type="nucleotide sequence ID" value="NM_001308262.2"/>
</dbReference>
<dbReference type="RefSeq" id="NP_722575.1">
    <molecule id="Q8IZA3-1"/>
    <property type="nucleotide sequence ID" value="NM_153833.3"/>
</dbReference>
<dbReference type="RefSeq" id="XP_016861222.1">
    <molecule id="Q8IZA3-2"/>
    <property type="nucleotide sequence ID" value="XM_017005733.2"/>
</dbReference>
<dbReference type="RefSeq" id="XP_054201270.1">
    <molecule id="Q8IZA3-2"/>
    <property type="nucleotide sequence ID" value="XM_054345295.1"/>
</dbReference>
<dbReference type="SMR" id="Q8IZA3"/>
<dbReference type="BioGRID" id="126315">
    <property type="interactions" value="190"/>
</dbReference>
<dbReference type="FunCoup" id="Q8IZA3">
    <property type="interactions" value="12"/>
</dbReference>
<dbReference type="IntAct" id="Q8IZA3">
    <property type="interactions" value="39"/>
</dbReference>
<dbReference type="STRING" id="9606.ENSP00000319799"/>
<dbReference type="iPTMnet" id="Q8IZA3"/>
<dbReference type="PhosphoSitePlus" id="Q8IZA3"/>
<dbReference type="BioMuta" id="H1FOO"/>
<dbReference type="DMDM" id="74762503"/>
<dbReference type="jPOST" id="Q8IZA3"/>
<dbReference type="MassIVE" id="Q8IZA3"/>
<dbReference type="PaxDb" id="9606-ENSP00000319799"/>
<dbReference type="PeptideAtlas" id="Q8IZA3"/>
<dbReference type="ProteomicsDB" id="71310">
    <molecule id="Q8IZA3-1"/>
</dbReference>
<dbReference type="ProteomicsDB" id="71311">
    <molecule id="Q8IZA3-2"/>
</dbReference>
<dbReference type="Antibodypedia" id="33282">
    <property type="antibodies" value="173 antibodies from 25 providers"/>
</dbReference>
<dbReference type="DNASU" id="132243"/>
<dbReference type="Ensembl" id="ENST00000324382.7">
    <molecule id="Q8IZA3-1"/>
    <property type="protein sequence ID" value="ENSP00000319799.2"/>
    <property type="gene ID" value="ENSG00000178804.8"/>
</dbReference>
<dbReference type="Ensembl" id="ENST00000503977.1">
    <molecule id="Q8IZA3-2"/>
    <property type="protein sequence ID" value="ENSP00000422964.1"/>
    <property type="gene ID" value="ENSG00000178804.8"/>
</dbReference>
<dbReference type="GeneID" id="132243"/>
<dbReference type="KEGG" id="hsa:132243"/>
<dbReference type="MANE-Select" id="ENST00000324382.7">
    <property type="protein sequence ID" value="ENSP00000319799.2"/>
    <property type="RefSeq nucleotide sequence ID" value="NM_153833.3"/>
    <property type="RefSeq protein sequence ID" value="NP_722575.1"/>
</dbReference>
<dbReference type="UCSC" id="uc003emu.3">
    <molecule id="Q8IZA3-1"/>
    <property type="organism name" value="human"/>
</dbReference>
<dbReference type="AGR" id="HGNC:18463"/>
<dbReference type="CTD" id="132243"/>
<dbReference type="DisGeNET" id="132243"/>
<dbReference type="GeneCards" id="H1-8"/>
<dbReference type="HGNC" id="HGNC:18463">
    <property type="gene designation" value="H1-8"/>
</dbReference>
<dbReference type="HPA" id="ENSG00000178804">
    <property type="expression patterns" value="Tissue enriched (testis)"/>
</dbReference>
<dbReference type="neXtProt" id="NX_Q8IZA3"/>
<dbReference type="VEuPathDB" id="HostDB:ENSG00000178804"/>
<dbReference type="eggNOG" id="KOG4012">
    <property type="taxonomic scope" value="Eukaryota"/>
</dbReference>
<dbReference type="GeneTree" id="ENSGT00940000160900"/>
<dbReference type="HOGENOM" id="CLU_070976_0_0_1"/>
<dbReference type="InParanoid" id="Q8IZA3"/>
<dbReference type="OMA" id="KMGPPMA"/>
<dbReference type="OrthoDB" id="1110759at2759"/>
<dbReference type="PAN-GO" id="Q8IZA3">
    <property type="GO annotations" value="5 GO annotations based on evolutionary models"/>
</dbReference>
<dbReference type="PhylomeDB" id="Q8IZA3"/>
<dbReference type="TreeFam" id="TF333386"/>
<dbReference type="PathwayCommons" id="Q8IZA3"/>
<dbReference type="Reactome" id="R-HSA-9821993">
    <property type="pathway name" value="Replacement of protamines by nucleosomes in the male pronucleus"/>
</dbReference>
<dbReference type="SignaLink" id="Q8IZA3"/>
<dbReference type="BioGRID-ORCS" id="132243">
    <property type="hits" value="15 hits in 1143 CRISPR screens"/>
</dbReference>
<dbReference type="GeneWiki" id="H1FOO"/>
<dbReference type="GenomeRNAi" id="132243"/>
<dbReference type="Pharos" id="Q8IZA3">
    <property type="development level" value="Tbio"/>
</dbReference>
<dbReference type="PRO" id="PR:Q8IZA3"/>
<dbReference type="Proteomes" id="UP000005640">
    <property type="component" value="Chromosome 3"/>
</dbReference>
<dbReference type="RNAct" id="Q8IZA3">
    <property type="molecule type" value="protein"/>
</dbReference>
<dbReference type="Bgee" id="ENSG00000178804">
    <property type="expression patterns" value="Expressed in oocyte and 23 other cell types or tissues"/>
</dbReference>
<dbReference type="GO" id="GO:0005737">
    <property type="term" value="C:cytoplasm"/>
    <property type="evidence" value="ECO:0007669"/>
    <property type="project" value="UniProtKB-SubCell"/>
</dbReference>
<dbReference type="GO" id="GO:0070062">
    <property type="term" value="C:extracellular exosome"/>
    <property type="evidence" value="ECO:0007005"/>
    <property type="project" value="UniProtKB"/>
</dbReference>
<dbReference type="GO" id="GO:0000786">
    <property type="term" value="C:nucleosome"/>
    <property type="evidence" value="ECO:0007669"/>
    <property type="project" value="InterPro"/>
</dbReference>
<dbReference type="GO" id="GO:0005634">
    <property type="term" value="C:nucleus"/>
    <property type="evidence" value="ECO:0000250"/>
    <property type="project" value="CAFA"/>
</dbReference>
<dbReference type="GO" id="GO:0003690">
    <property type="term" value="F:double-stranded DNA binding"/>
    <property type="evidence" value="ECO:0000318"/>
    <property type="project" value="GO_Central"/>
</dbReference>
<dbReference type="GO" id="GO:0031492">
    <property type="term" value="F:nucleosomal DNA binding"/>
    <property type="evidence" value="ECO:0000250"/>
    <property type="project" value="CAFA"/>
</dbReference>
<dbReference type="GO" id="GO:0030527">
    <property type="term" value="F:structural constituent of chromatin"/>
    <property type="evidence" value="ECO:0000250"/>
    <property type="project" value="CAFA"/>
</dbReference>
<dbReference type="GO" id="GO:0030261">
    <property type="term" value="P:chromosome condensation"/>
    <property type="evidence" value="ECO:0000318"/>
    <property type="project" value="GO_Central"/>
</dbReference>
<dbReference type="GO" id="GO:0040029">
    <property type="term" value="P:epigenetic regulation of gene expression"/>
    <property type="evidence" value="ECO:0000250"/>
    <property type="project" value="CAFA"/>
</dbReference>
<dbReference type="GO" id="GO:0051321">
    <property type="term" value="P:meiotic cell cycle"/>
    <property type="evidence" value="ECO:0007669"/>
    <property type="project" value="UniProtKB-KW"/>
</dbReference>
<dbReference type="GO" id="GO:0045910">
    <property type="term" value="P:negative regulation of DNA recombination"/>
    <property type="evidence" value="ECO:0000318"/>
    <property type="project" value="GO_Central"/>
</dbReference>
<dbReference type="GO" id="GO:0006334">
    <property type="term" value="P:nucleosome assembly"/>
    <property type="evidence" value="ECO:0007669"/>
    <property type="project" value="InterPro"/>
</dbReference>
<dbReference type="CDD" id="cd00073">
    <property type="entry name" value="H15"/>
    <property type="match status" value="1"/>
</dbReference>
<dbReference type="FunFam" id="1.10.10.10:FF:000393">
    <property type="entry name" value="Oocyte-specific H1 histone"/>
    <property type="match status" value="1"/>
</dbReference>
<dbReference type="Gene3D" id="1.10.10.10">
    <property type="entry name" value="Winged helix-like DNA-binding domain superfamily/Winged helix DNA-binding domain"/>
    <property type="match status" value="1"/>
</dbReference>
<dbReference type="InterPro" id="IPR005818">
    <property type="entry name" value="Histone_H1/H5_H15"/>
</dbReference>
<dbReference type="InterPro" id="IPR036388">
    <property type="entry name" value="WH-like_DNA-bd_sf"/>
</dbReference>
<dbReference type="InterPro" id="IPR036390">
    <property type="entry name" value="WH_DNA-bd_sf"/>
</dbReference>
<dbReference type="Pfam" id="PF00538">
    <property type="entry name" value="Linker_histone"/>
    <property type="match status" value="1"/>
</dbReference>
<dbReference type="SMART" id="SM00526">
    <property type="entry name" value="H15"/>
    <property type="match status" value="1"/>
</dbReference>
<dbReference type="SUPFAM" id="SSF46785">
    <property type="entry name" value="Winged helix' DNA-binding domain"/>
    <property type="match status" value="1"/>
</dbReference>
<dbReference type="PROSITE" id="PS51504">
    <property type="entry name" value="H15"/>
    <property type="match status" value="1"/>
</dbReference>
<gene>
    <name evidence="8" type="primary">H1-8</name>
    <name evidence="8" type="synonym">H1FOO</name>
    <name type="synonym">H1OO</name>
    <name type="synonym">OSH1</name>
</gene>
<accession>Q8IZA3</accession>
<accession>Q86WT7</accession>
<keyword id="KW-0025">Alternative splicing</keyword>
<keyword id="KW-0158">Chromosome</keyword>
<keyword id="KW-0963">Cytoplasm</keyword>
<keyword id="KW-0238">DNA-binding</keyword>
<keyword id="KW-0469">Meiosis</keyword>
<keyword id="KW-0539">Nucleus</keyword>
<keyword id="KW-1185">Reference proteome</keyword>